<comment type="function">
    <text evidence="2">Plays a role in pre-mRNA splicing and in the regulation of alternative splicing events. Activates exon skipping of its own pre-mRNA during muscle cell differentiation. Binds to the polypyrimidine tract of introns. May promote RNA looping when bound to two separate polypyrimidine tracts in the same pre-mRNA. May promote the binding of U2 snRNP to pre-mRNA. Cooperates with RAVER1 to modulate switching between mutually exclusive exons during maturation of the TPM1 pre-mRNA. Represses the splicing of MAPT/Tau exon 10. Binds to polypyrimidine-rich controlling element (PCE) of CFTR and promotes exon skipping of CFTR exon 9, thereby antagonizing TIA1 and its role in exon inclusion of CFTR exon 9. Plays a role in the splicing of pyruvate kinase PKM by binding repressively to a polypyrimidine tract flanking PKM exon 9, inhibiting exon 9 inclusion and resulting in exon 10 inclusion and production of the PKM M2 isoform.</text>
</comment>
<comment type="subunit">
    <text evidence="1">Monomer. Part of a ternary complex containing KHSRP, PTBP1, PTBP2 and HNRPH1. Interacts with RAVER1 and SFPQ (By similarity).</text>
</comment>
<comment type="subcellular location">
    <subcellularLocation>
        <location>Nucleus</location>
    </subcellularLocation>
</comment>
<name>PTBP1_PIG</name>
<feature type="chain" id="PRO_0000081739" description="Polypyrimidine tract-binding protein 1">
    <location>
        <begin position="1"/>
        <end position="557"/>
    </location>
</feature>
<feature type="domain" description="RRM 1" evidence="3">
    <location>
        <begin position="59"/>
        <end position="143"/>
    </location>
</feature>
<feature type="domain" description="RRM 2" evidence="3">
    <location>
        <begin position="184"/>
        <end position="260"/>
    </location>
</feature>
<feature type="domain" description="RRM 3" evidence="3">
    <location>
        <begin position="363"/>
        <end position="437"/>
    </location>
</feature>
<feature type="domain" description="RRM 4" evidence="3">
    <location>
        <begin position="480"/>
        <end position="555"/>
    </location>
</feature>
<feature type="modified residue" description="N-acetylmethionine" evidence="2">
    <location>
        <position position="1"/>
    </location>
</feature>
<feature type="modified residue" description="Phosphoserine" evidence="2">
    <location>
        <position position="16"/>
    </location>
</feature>
<feature type="modified residue" description="Phosphotyrosine" evidence="2">
    <location>
        <position position="127"/>
    </location>
</feature>
<feature type="modified residue" description="Phosphothreonine" evidence="2">
    <location>
        <position position="138"/>
    </location>
</feature>
<feature type="modified residue" description="Phosphoserine" evidence="2">
    <location>
        <position position="141"/>
    </location>
</feature>
<feature type="modified residue" description="Phosphoserine" evidence="2">
    <location>
        <position position="459"/>
    </location>
</feature>
<feature type="cross-link" description="Glycyl lysine isopeptide (Lys-Gly) (interchain with G-Cter in SUMO2)" evidence="2">
    <location>
        <position position="65"/>
    </location>
</feature>
<feature type="cross-link" description="Glycyl lysine isopeptide (Lys-Gly) (interchain with G-Cter in SUMO2)" evidence="2">
    <location>
        <position position="218"/>
    </location>
</feature>
<feature type="sequence conflict" description="In Ref. 1; CAA63597." evidence="4" ref="1">
    <original>GL</original>
    <variation>TV</variation>
    <location>
        <begin position="324"/>
        <end position="325"/>
    </location>
</feature>
<feature type="sequence conflict" description="In Ref. 1; CAA63597." evidence="4" ref="1">
    <original>A</original>
    <variation>R</variation>
    <location>
        <position position="345"/>
    </location>
</feature>
<feature type="sequence conflict" description="In Ref. 1; CAA63597." evidence="4" ref="1">
    <original>G</original>
    <variation>C</variation>
    <location>
        <position position="388"/>
    </location>
</feature>
<organism>
    <name type="scientific">Sus scrofa</name>
    <name type="common">Pig</name>
    <dbReference type="NCBI Taxonomy" id="9823"/>
    <lineage>
        <taxon>Eukaryota</taxon>
        <taxon>Metazoa</taxon>
        <taxon>Chordata</taxon>
        <taxon>Craniata</taxon>
        <taxon>Vertebrata</taxon>
        <taxon>Euteleostomi</taxon>
        <taxon>Mammalia</taxon>
        <taxon>Eutheria</taxon>
        <taxon>Laurasiatheria</taxon>
        <taxon>Artiodactyla</taxon>
        <taxon>Suina</taxon>
        <taxon>Suidae</taxon>
        <taxon>Sus</taxon>
    </lineage>
</organism>
<gene>
    <name type="primary">PTBP1</name>
    <name type="synonym">PTB</name>
</gene>
<protein>
    <recommendedName>
        <fullName>Polypyrimidine tract-binding protein 1</fullName>
        <shortName>PTB</shortName>
    </recommendedName>
    <alternativeName>
        <fullName>Heterogeneous nuclear ribonucleoprotein I</fullName>
        <shortName>hnRNP I</shortName>
    </alternativeName>
</protein>
<dbReference type="EMBL" id="X93009">
    <property type="protein sequence ID" value="CAA63597.1"/>
    <property type="molecule type" value="mRNA"/>
</dbReference>
<dbReference type="PIR" id="S68857">
    <property type="entry name" value="S68857"/>
</dbReference>
<dbReference type="RefSeq" id="NP_999396.2">
    <property type="nucleotide sequence ID" value="NM_214231.3"/>
</dbReference>
<dbReference type="RefSeq" id="XP_005661467.1">
    <property type="nucleotide sequence ID" value="XM_005661410.2"/>
</dbReference>
<dbReference type="BMRB" id="Q29099"/>
<dbReference type="SMR" id="Q29099"/>
<dbReference type="FunCoup" id="Q29099">
    <property type="interactions" value="2028"/>
</dbReference>
<dbReference type="IntAct" id="Q29099">
    <property type="interactions" value="3"/>
</dbReference>
<dbReference type="STRING" id="9823.ENSSSCP00000062213"/>
<dbReference type="PaxDb" id="9823-ENSSSCP00000014270"/>
<dbReference type="PeptideAtlas" id="Q29099"/>
<dbReference type="Ensembl" id="ENSSSCT00070053777.1">
    <property type="protein sequence ID" value="ENSSSCP00070045595.1"/>
    <property type="gene ID" value="ENSSSCG00070026813.1"/>
</dbReference>
<dbReference type="Ensembl" id="ENSSSCT00115016798">
    <property type="protein sequence ID" value="ENSSSCP00115015853"/>
    <property type="gene ID" value="ENSSSCG00115009593"/>
</dbReference>
<dbReference type="Ensembl" id="ENSSSCT00130074321">
    <property type="protein sequence ID" value="ENSSSCP00130053487"/>
    <property type="gene ID" value="ENSSSCG00130037918"/>
</dbReference>
<dbReference type="GeneID" id="397461"/>
<dbReference type="KEGG" id="ssc:397461"/>
<dbReference type="CTD" id="5725"/>
<dbReference type="eggNOG" id="KOG1190">
    <property type="taxonomic scope" value="Eukaryota"/>
</dbReference>
<dbReference type="InParanoid" id="Q29099"/>
<dbReference type="OrthoDB" id="296632at2759"/>
<dbReference type="Proteomes" id="UP000008227">
    <property type="component" value="Unplaced"/>
</dbReference>
<dbReference type="Proteomes" id="UP000314985">
    <property type="component" value="Chromosome 2"/>
</dbReference>
<dbReference type="Proteomes" id="UP000694570">
    <property type="component" value="Unplaced"/>
</dbReference>
<dbReference type="Proteomes" id="UP000694571">
    <property type="component" value="Unplaced"/>
</dbReference>
<dbReference type="Proteomes" id="UP000694720">
    <property type="component" value="Unplaced"/>
</dbReference>
<dbReference type="Proteomes" id="UP000694722">
    <property type="component" value="Unplaced"/>
</dbReference>
<dbReference type="Proteomes" id="UP000694723">
    <property type="component" value="Unplaced"/>
</dbReference>
<dbReference type="Proteomes" id="UP000694724">
    <property type="component" value="Unplaced"/>
</dbReference>
<dbReference type="Proteomes" id="UP000694725">
    <property type="component" value="Unplaced"/>
</dbReference>
<dbReference type="Proteomes" id="UP000694726">
    <property type="component" value="Unplaced"/>
</dbReference>
<dbReference type="Proteomes" id="UP000694727">
    <property type="component" value="Unplaced"/>
</dbReference>
<dbReference type="Proteomes" id="UP000694728">
    <property type="component" value="Unplaced"/>
</dbReference>
<dbReference type="GO" id="GO:0005634">
    <property type="term" value="C:nucleus"/>
    <property type="evidence" value="ECO:0000318"/>
    <property type="project" value="GO_Central"/>
</dbReference>
<dbReference type="GO" id="GO:0003729">
    <property type="term" value="F:mRNA binding"/>
    <property type="evidence" value="ECO:0000318"/>
    <property type="project" value="GO_Central"/>
</dbReference>
<dbReference type="GO" id="GO:0006397">
    <property type="term" value="P:mRNA processing"/>
    <property type="evidence" value="ECO:0007669"/>
    <property type="project" value="UniProtKB-KW"/>
</dbReference>
<dbReference type="GO" id="GO:0048025">
    <property type="term" value="P:negative regulation of mRNA splicing, via spliceosome"/>
    <property type="evidence" value="ECO:0000250"/>
    <property type="project" value="UniProtKB"/>
</dbReference>
<dbReference type="GO" id="GO:0051148">
    <property type="term" value="P:negative regulation of muscle cell differentiation"/>
    <property type="evidence" value="ECO:0000250"/>
    <property type="project" value="UniProtKB"/>
</dbReference>
<dbReference type="GO" id="GO:0000381">
    <property type="term" value="P:regulation of alternative mRNA splicing, via spliceosome"/>
    <property type="evidence" value="ECO:0000250"/>
    <property type="project" value="UniProtKB"/>
</dbReference>
<dbReference type="GO" id="GO:0045595">
    <property type="term" value="P:regulation of cell differentiation"/>
    <property type="evidence" value="ECO:0000318"/>
    <property type="project" value="GO_Central"/>
</dbReference>
<dbReference type="GO" id="GO:0043484">
    <property type="term" value="P:regulation of RNA splicing"/>
    <property type="evidence" value="ECO:0000318"/>
    <property type="project" value="GO_Central"/>
</dbReference>
<dbReference type="GO" id="GO:0008380">
    <property type="term" value="P:RNA splicing"/>
    <property type="evidence" value="ECO:0007669"/>
    <property type="project" value="UniProtKB-KW"/>
</dbReference>
<dbReference type="CDD" id="cd12777">
    <property type="entry name" value="RRM1_PTBP1"/>
    <property type="match status" value="1"/>
</dbReference>
<dbReference type="CDD" id="cd12782">
    <property type="entry name" value="RRM2_PTBP1"/>
    <property type="match status" value="1"/>
</dbReference>
<dbReference type="CDD" id="cd12695">
    <property type="entry name" value="RRM3_PTBP1"/>
    <property type="match status" value="1"/>
</dbReference>
<dbReference type="CDD" id="cd12701">
    <property type="entry name" value="RRM4_PTBP1"/>
    <property type="match status" value="1"/>
</dbReference>
<dbReference type="FunFam" id="3.30.70.330:FF:000036">
    <property type="entry name" value="polypyrimidine tract-binding protein 1 isoform X2"/>
    <property type="match status" value="1"/>
</dbReference>
<dbReference type="FunFam" id="3.30.70.330:FF:000162">
    <property type="entry name" value="polypyrimidine tract-binding protein 1 isoform X2"/>
    <property type="match status" value="1"/>
</dbReference>
<dbReference type="FunFam" id="3.30.70.330:FF:000018">
    <property type="entry name" value="Polypyrimidine tract-binding protein 2 isoform 1"/>
    <property type="match status" value="1"/>
</dbReference>
<dbReference type="FunFam" id="3.30.70.330:FF:000032">
    <property type="entry name" value="Polypyrimidine tract-binding protein 2 isoform 1"/>
    <property type="match status" value="1"/>
</dbReference>
<dbReference type="Gene3D" id="3.30.70.330">
    <property type="match status" value="4"/>
</dbReference>
<dbReference type="InterPro" id="IPR006536">
    <property type="entry name" value="HnRNP-L/PTB"/>
</dbReference>
<dbReference type="InterPro" id="IPR012677">
    <property type="entry name" value="Nucleotide-bd_a/b_plait_sf"/>
</dbReference>
<dbReference type="InterPro" id="IPR021790">
    <property type="entry name" value="PTBP1-like_RRM2"/>
</dbReference>
<dbReference type="InterPro" id="IPR035000">
    <property type="entry name" value="PTBP1_RRM1"/>
</dbReference>
<dbReference type="InterPro" id="IPR035001">
    <property type="entry name" value="PTBP1_RRM3"/>
</dbReference>
<dbReference type="InterPro" id="IPR035979">
    <property type="entry name" value="RBD_domain_sf"/>
</dbReference>
<dbReference type="InterPro" id="IPR000504">
    <property type="entry name" value="RRM_dom"/>
</dbReference>
<dbReference type="NCBIfam" id="TIGR01649">
    <property type="entry name" value="hnRNP-L_PTB"/>
    <property type="match status" value="1"/>
</dbReference>
<dbReference type="PANTHER" id="PTHR15592">
    <property type="entry name" value="MATRIN 3/NUCLEAR PROTEIN 220-RELATED"/>
    <property type="match status" value="1"/>
</dbReference>
<dbReference type="Pfam" id="PF00076">
    <property type="entry name" value="RRM_1"/>
    <property type="match status" value="1"/>
</dbReference>
<dbReference type="Pfam" id="PF13893">
    <property type="entry name" value="RRM_5"/>
    <property type="match status" value="2"/>
</dbReference>
<dbReference type="Pfam" id="PF11835">
    <property type="entry name" value="RRM_8"/>
    <property type="match status" value="1"/>
</dbReference>
<dbReference type="SMART" id="SM00360">
    <property type="entry name" value="RRM"/>
    <property type="match status" value="4"/>
</dbReference>
<dbReference type="SUPFAM" id="SSF54928">
    <property type="entry name" value="RNA-binding domain, RBD"/>
    <property type="match status" value="3"/>
</dbReference>
<dbReference type="PROSITE" id="PS50102">
    <property type="entry name" value="RRM"/>
    <property type="match status" value="4"/>
</dbReference>
<proteinExistence type="evidence at transcript level"/>
<keyword id="KW-0007">Acetylation</keyword>
<keyword id="KW-0010">Activator</keyword>
<keyword id="KW-1017">Isopeptide bond</keyword>
<keyword id="KW-0507">mRNA processing</keyword>
<keyword id="KW-0508">mRNA splicing</keyword>
<keyword id="KW-0539">Nucleus</keyword>
<keyword id="KW-0597">Phosphoprotein</keyword>
<keyword id="KW-1185">Reference proteome</keyword>
<keyword id="KW-0677">Repeat</keyword>
<keyword id="KW-0678">Repressor</keyword>
<keyword id="KW-0694">RNA-binding</keyword>
<keyword id="KW-0832">Ubl conjugation</keyword>
<sequence length="557" mass="59694">MDGIVPDIAVGTKRGSDELFSACVTNGPFIMSSNSASTANGNDSKKFKGDNRSAGVPSRVIHIRKLPSDVTEGEVISLGLPFGKVTNLLMLKGKNQAFIEMNTEEAANTMVNYYTSVTPVLRGQPIYIQFSNHKELKTDSSPNQARAQAALQAVNSVQSGNLALAASAAAVDAGMAMAGQSPVLRIIVENLFYPVTLDVLHQIFSKFGTVLKIITFTKNNQFQALLQYADPVSAQHAKLSLDGQNIYNACCTLRIDFSKLTSLNVKYNNDKSRDYTRPDLPSGDNQPSLDQTMAAAFGAPGIMSASPYAGAGFPPTFAIPQAAGLSVPNVHGALAPLAIPSAAAAAAAAGRIAIPGLAGAGNSVLLVSNLNPERVTPQSLFILFGVYGDVQRVKILFNKKENALVQMADGSQAQLAMSHLNGHKLHGKPVRITLSKHQNVQLPREGQEDQGLTKDYGNSPLHRFKKPGSKNFQNIFPPSATLHLSNIPPSISEEDLKILFSSNGGIVKGFKFFQKDRKMALIQMGSVEEAIQALIDLHNHDLGENHHLRVSFSKSTI</sequence>
<evidence type="ECO:0000250" key="1"/>
<evidence type="ECO:0000250" key="2">
    <source>
        <dbReference type="UniProtKB" id="P26599"/>
    </source>
</evidence>
<evidence type="ECO:0000255" key="3">
    <source>
        <dbReference type="PROSITE-ProRule" id="PRU00176"/>
    </source>
</evidence>
<evidence type="ECO:0000305" key="4"/>
<accession>Q29099</accession>
<accession>A0A4X1VPV8</accession>
<reference key="1">
    <citation type="journal article" date="1996" name="FEBS Lett.">
        <title>Porcine polypyrimidine tract-binding protein stimulates translation initiation at the internal ribosome entry site of foot-and-mouth-disease virus.</title>
        <authorList>
            <person name="Niepmann M."/>
        </authorList>
    </citation>
    <scope>NUCLEOTIDE SEQUENCE [MRNA]</scope>
    <source>
        <tissue>Liver</tissue>
    </source>
</reference>
<reference key="2">
    <citation type="submission" date="2017-08" db="EMBL/GenBank/DDBJ databases">
        <title>USMARCv1.0.</title>
        <authorList>
            <person name="Hannum G.I."/>
            <person name="Koren S."/>
            <person name="Schroeder S.G."/>
            <person name="Chin S.C."/>
            <person name="Nonneman D.J."/>
            <person name="Becker S.A."/>
            <person name="Rosen B.D."/>
            <person name="Bickhart D.M."/>
            <person name="Putnam N.H."/>
            <person name="Green R.E."/>
            <person name="Tuggle C.K."/>
            <person name="Liu H."/>
            <person name="Rohrer G.A."/>
            <person name="Warr A."/>
            <person name="Hall R."/>
            <person name="Kim K."/>
            <person name="Hume D.A."/>
            <person name="Talbot R."/>
            <person name="Chow W."/>
            <person name="Howe K."/>
            <person name="Schwartz A.S."/>
            <person name="Watson M."/>
            <person name="Archibald A.L."/>
            <person name="Phillippy A.M."/>
            <person name="Smith T.P.L."/>
        </authorList>
    </citation>
    <scope>NUCLEOTIDE SEQUENCE [LARGE SCALE GENOMIC DNA]</scope>
</reference>